<dbReference type="EC" id="2.7.7.6" evidence="1"/>
<dbReference type="EMBL" id="CP000283">
    <property type="protein sequence ID" value="ABE40420.1"/>
    <property type="molecule type" value="Genomic_DNA"/>
</dbReference>
<dbReference type="SMR" id="Q134R9"/>
<dbReference type="STRING" id="316057.RPD_3194"/>
<dbReference type="KEGG" id="rpd:RPD_3194"/>
<dbReference type="eggNOG" id="COG0086">
    <property type="taxonomic scope" value="Bacteria"/>
</dbReference>
<dbReference type="HOGENOM" id="CLU_000524_3_1_5"/>
<dbReference type="BioCyc" id="RPAL316057:RPD_RS16035-MONOMER"/>
<dbReference type="Proteomes" id="UP000001818">
    <property type="component" value="Chromosome"/>
</dbReference>
<dbReference type="GO" id="GO:0000428">
    <property type="term" value="C:DNA-directed RNA polymerase complex"/>
    <property type="evidence" value="ECO:0007669"/>
    <property type="project" value="UniProtKB-KW"/>
</dbReference>
<dbReference type="GO" id="GO:0003677">
    <property type="term" value="F:DNA binding"/>
    <property type="evidence" value="ECO:0007669"/>
    <property type="project" value="UniProtKB-UniRule"/>
</dbReference>
<dbReference type="GO" id="GO:0003899">
    <property type="term" value="F:DNA-directed RNA polymerase activity"/>
    <property type="evidence" value="ECO:0007669"/>
    <property type="project" value="UniProtKB-UniRule"/>
</dbReference>
<dbReference type="GO" id="GO:0000287">
    <property type="term" value="F:magnesium ion binding"/>
    <property type="evidence" value="ECO:0007669"/>
    <property type="project" value="UniProtKB-UniRule"/>
</dbReference>
<dbReference type="GO" id="GO:0008270">
    <property type="term" value="F:zinc ion binding"/>
    <property type="evidence" value="ECO:0007669"/>
    <property type="project" value="UniProtKB-UniRule"/>
</dbReference>
<dbReference type="GO" id="GO:0006351">
    <property type="term" value="P:DNA-templated transcription"/>
    <property type="evidence" value="ECO:0007669"/>
    <property type="project" value="UniProtKB-UniRule"/>
</dbReference>
<dbReference type="CDD" id="cd02655">
    <property type="entry name" value="RNAP_beta'_C"/>
    <property type="match status" value="1"/>
</dbReference>
<dbReference type="CDD" id="cd01609">
    <property type="entry name" value="RNAP_beta'_N"/>
    <property type="match status" value="1"/>
</dbReference>
<dbReference type="Gene3D" id="1.10.132.30">
    <property type="match status" value="1"/>
</dbReference>
<dbReference type="Gene3D" id="1.10.150.390">
    <property type="match status" value="1"/>
</dbReference>
<dbReference type="Gene3D" id="1.10.1790.20">
    <property type="match status" value="1"/>
</dbReference>
<dbReference type="Gene3D" id="1.10.40.90">
    <property type="match status" value="1"/>
</dbReference>
<dbReference type="Gene3D" id="2.40.40.20">
    <property type="match status" value="1"/>
</dbReference>
<dbReference type="Gene3D" id="2.40.50.100">
    <property type="match status" value="3"/>
</dbReference>
<dbReference type="Gene3D" id="4.10.860.120">
    <property type="entry name" value="RNA polymerase II, clamp domain"/>
    <property type="match status" value="1"/>
</dbReference>
<dbReference type="Gene3D" id="1.10.274.100">
    <property type="entry name" value="RNA polymerase Rpb1, domain 3"/>
    <property type="match status" value="2"/>
</dbReference>
<dbReference type="HAMAP" id="MF_01322">
    <property type="entry name" value="RNApol_bact_RpoC"/>
    <property type="match status" value="1"/>
</dbReference>
<dbReference type="InterPro" id="IPR045867">
    <property type="entry name" value="DNA-dir_RpoC_beta_prime"/>
</dbReference>
<dbReference type="InterPro" id="IPR012754">
    <property type="entry name" value="DNA-dir_RpoC_beta_prime_bact"/>
</dbReference>
<dbReference type="InterPro" id="IPR000722">
    <property type="entry name" value="RNA_pol_asu"/>
</dbReference>
<dbReference type="InterPro" id="IPR006592">
    <property type="entry name" value="RNA_pol_N"/>
</dbReference>
<dbReference type="InterPro" id="IPR007080">
    <property type="entry name" value="RNA_pol_Rpb1_1"/>
</dbReference>
<dbReference type="InterPro" id="IPR007066">
    <property type="entry name" value="RNA_pol_Rpb1_3"/>
</dbReference>
<dbReference type="InterPro" id="IPR042102">
    <property type="entry name" value="RNA_pol_Rpb1_3_sf"/>
</dbReference>
<dbReference type="InterPro" id="IPR007083">
    <property type="entry name" value="RNA_pol_Rpb1_4"/>
</dbReference>
<dbReference type="InterPro" id="IPR007081">
    <property type="entry name" value="RNA_pol_Rpb1_5"/>
</dbReference>
<dbReference type="InterPro" id="IPR044893">
    <property type="entry name" value="RNA_pol_Rpb1_clamp_domain"/>
</dbReference>
<dbReference type="InterPro" id="IPR038120">
    <property type="entry name" value="Rpb1_funnel_sf"/>
</dbReference>
<dbReference type="NCBIfam" id="TIGR02386">
    <property type="entry name" value="rpoC_TIGR"/>
    <property type="match status" value="1"/>
</dbReference>
<dbReference type="PANTHER" id="PTHR19376">
    <property type="entry name" value="DNA-DIRECTED RNA POLYMERASE"/>
    <property type="match status" value="1"/>
</dbReference>
<dbReference type="PANTHER" id="PTHR19376:SF54">
    <property type="entry name" value="DNA-DIRECTED RNA POLYMERASE SUBUNIT BETA"/>
    <property type="match status" value="1"/>
</dbReference>
<dbReference type="Pfam" id="PF04997">
    <property type="entry name" value="RNA_pol_Rpb1_1"/>
    <property type="match status" value="1"/>
</dbReference>
<dbReference type="Pfam" id="PF00623">
    <property type="entry name" value="RNA_pol_Rpb1_2"/>
    <property type="match status" value="2"/>
</dbReference>
<dbReference type="Pfam" id="PF04983">
    <property type="entry name" value="RNA_pol_Rpb1_3"/>
    <property type="match status" value="1"/>
</dbReference>
<dbReference type="Pfam" id="PF05000">
    <property type="entry name" value="RNA_pol_Rpb1_4"/>
    <property type="match status" value="1"/>
</dbReference>
<dbReference type="Pfam" id="PF04998">
    <property type="entry name" value="RNA_pol_Rpb1_5"/>
    <property type="match status" value="1"/>
</dbReference>
<dbReference type="SMART" id="SM00663">
    <property type="entry name" value="RPOLA_N"/>
    <property type="match status" value="1"/>
</dbReference>
<dbReference type="SUPFAM" id="SSF64484">
    <property type="entry name" value="beta and beta-prime subunits of DNA dependent RNA-polymerase"/>
    <property type="match status" value="1"/>
</dbReference>
<reference key="1">
    <citation type="submission" date="2006-03" db="EMBL/GenBank/DDBJ databases">
        <title>Complete sequence of Rhodopseudomonas palustris BisB5.</title>
        <authorList>
            <consortium name="US DOE Joint Genome Institute"/>
            <person name="Copeland A."/>
            <person name="Lucas S."/>
            <person name="Lapidus A."/>
            <person name="Barry K."/>
            <person name="Detter J.C."/>
            <person name="Glavina del Rio T."/>
            <person name="Hammon N."/>
            <person name="Israni S."/>
            <person name="Dalin E."/>
            <person name="Tice H."/>
            <person name="Pitluck S."/>
            <person name="Chain P."/>
            <person name="Malfatti S."/>
            <person name="Shin M."/>
            <person name="Vergez L."/>
            <person name="Schmutz J."/>
            <person name="Larimer F."/>
            <person name="Land M."/>
            <person name="Hauser L."/>
            <person name="Pelletier D.A."/>
            <person name="Kyrpides N."/>
            <person name="Lykidis A."/>
            <person name="Oda Y."/>
            <person name="Harwood C.S."/>
            <person name="Richardson P."/>
        </authorList>
    </citation>
    <scope>NUCLEOTIDE SEQUENCE [LARGE SCALE GENOMIC DNA]</scope>
    <source>
        <strain>BisB5</strain>
    </source>
</reference>
<protein>
    <recommendedName>
        <fullName evidence="1">DNA-directed RNA polymerase subunit beta'</fullName>
        <shortName evidence="1">RNAP subunit beta'</shortName>
        <ecNumber evidence="1">2.7.7.6</ecNumber>
    </recommendedName>
    <alternativeName>
        <fullName evidence="1">RNA polymerase subunit beta'</fullName>
    </alternativeName>
    <alternativeName>
        <fullName evidence="1">Transcriptase subunit beta'</fullName>
    </alternativeName>
</protein>
<gene>
    <name evidence="1" type="primary">rpoC</name>
    <name type="ordered locus">RPD_3194</name>
</gene>
<accession>Q134R9</accession>
<sequence>MNQEIMNLFNPTTPAQVFDQIRISIASPEKILSWSYGEIKKPETINYRTFKPERDGLFCARIFGPIKDYECLCGKYKRMKYKGIICEKCSVEVTLSRVRRERMGHIELAAPVAHIWFLKSLPSRIGQLLDMTLKDLERILYFEYYVVLEPGLTDLKERQLLSEEEYLRAQDQYGQDSFTAMIGAEAIRELLKGLELEKIDAQLRVEMAETDSDIKHKKLAKRLKIVEAFRYSGNKPEWMILTVVPVIPPDLRPLVPLDGGRFATSDLNDLYRRVINRNNRLKRLMELRAPDIIIRNEKRMLQEAVDALFDNGRRGRVITGANKRPLKSLADMLKGKQGRFRQNLLGKRVDYSGRSVIVVGPELKLHQCGLPKKMALELFKPFIYSRLDAKGLSTTVKQAKKLVEKERPEVWDILDEVIREHPVLLNRAPTLHRLGIQAFEPVLIEGKAIQLHPLVCAAFNADFDGDQMAVHVPLSLEAQLEARVLMMSTNNILHPANGQPIIVPSQDIVLGLYYLSILREGLPGEGKVFGDLAELEHALHAKVIHLHTKIKYRWDSLDDEGKPYKRLIETTAGRILLGQVLPKSVKLPYETINKLMTKREISSVIDQVYRHCGQKETVIFCDRIMALGFFNAFKAGISFGKDDMVVPASKWKIVDTTRTLAKDFEQQYNDGLITHGEKYNKVVDAWSKATEEIAKEMMKEISAVRKNASGAESQVNSIYMMAHSGARGSPAQMRQLAGMRGLMAKPSGEIIETPIISNFKEGLSVLEYFNSTHGARKGLADTALKTANSGYLTRRLVDVAQDCIITQDDCGTSLGIKMRAIIDAGTVVASLGSRILGRTAGEDVRDPQTNEVIVKKGELMEERDIEAIHQAGVQEVKIRSALTCELVNGICGKCYGRDLARGTPVNHGEAVGVIAAQSIGEPGTQLTMRTFHIGGAAQINEQSVIESNFEGKVVIKNKAIARNGENHNVAMVRNMVVAIVDPDGTERATHRIQYGARMHVDEGDTIKRGHRIAEWDPYSRPVLTEVEGTIDFEDLIEDQSISETLDESTGIAKRIVIDWRSTRGGADLRPAIVIKGKDGKVLKLARGGDARYMLSVDAILSVDVGAKVKPGDILARISTESAKTRDITGGLPRVAELFEARKPKDAAIIAEIAGTIRFGRDYKNKRRISIEPMDKEEEAREYLIPKGKHIHLQDGDIVEKGDFIVEGNPAPHDILAIKGIEELAAYLVNEIQEVYRLQGVLINDKHIEVIVRQMLQKVEITDQGETDMISGEQIDKIEFDQLNVKARDEGKKIATGTPVLLGITKASLQTRSFFSAASFQETTRVLTEAAVNGKVDPLEGLKENVIVGRLIPAGTGASMAKIREVAMKRDRMILDEREKQATIVPPAAPEAEPLALPPAE</sequence>
<comment type="function">
    <text evidence="1">DNA-dependent RNA polymerase catalyzes the transcription of DNA into RNA using the four ribonucleoside triphosphates as substrates.</text>
</comment>
<comment type="catalytic activity">
    <reaction evidence="1">
        <text>RNA(n) + a ribonucleoside 5'-triphosphate = RNA(n+1) + diphosphate</text>
        <dbReference type="Rhea" id="RHEA:21248"/>
        <dbReference type="Rhea" id="RHEA-COMP:14527"/>
        <dbReference type="Rhea" id="RHEA-COMP:17342"/>
        <dbReference type="ChEBI" id="CHEBI:33019"/>
        <dbReference type="ChEBI" id="CHEBI:61557"/>
        <dbReference type="ChEBI" id="CHEBI:140395"/>
        <dbReference type="EC" id="2.7.7.6"/>
    </reaction>
</comment>
<comment type="cofactor">
    <cofactor evidence="1">
        <name>Mg(2+)</name>
        <dbReference type="ChEBI" id="CHEBI:18420"/>
    </cofactor>
    <text evidence="1">Binds 1 Mg(2+) ion per subunit.</text>
</comment>
<comment type="cofactor">
    <cofactor evidence="1">
        <name>Zn(2+)</name>
        <dbReference type="ChEBI" id="CHEBI:29105"/>
    </cofactor>
    <text evidence="1">Binds 2 Zn(2+) ions per subunit.</text>
</comment>
<comment type="subunit">
    <text evidence="1">The RNAP catalytic core consists of 2 alpha, 1 beta, 1 beta' and 1 omega subunit. When a sigma factor is associated with the core the holoenzyme is formed, which can initiate transcription.</text>
</comment>
<comment type="similarity">
    <text evidence="1">Belongs to the RNA polymerase beta' chain family.</text>
</comment>
<keyword id="KW-0240">DNA-directed RNA polymerase</keyword>
<keyword id="KW-0460">Magnesium</keyword>
<keyword id="KW-0479">Metal-binding</keyword>
<keyword id="KW-0548">Nucleotidyltransferase</keyword>
<keyword id="KW-0804">Transcription</keyword>
<keyword id="KW-0808">Transferase</keyword>
<keyword id="KW-0862">Zinc</keyword>
<proteinExistence type="inferred from homology"/>
<feature type="chain" id="PRO_1000086409" description="DNA-directed RNA polymerase subunit beta'">
    <location>
        <begin position="1"/>
        <end position="1400"/>
    </location>
</feature>
<feature type="region of interest" description="Disordered" evidence="2">
    <location>
        <begin position="1378"/>
        <end position="1400"/>
    </location>
</feature>
<feature type="binding site" evidence="1">
    <location>
        <position position="71"/>
    </location>
    <ligand>
        <name>Zn(2+)</name>
        <dbReference type="ChEBI" id="CHEBI:29105"/>
        <label>1</label>
    </ligand>
</feature>
<feature type="binding site" evidence="1">
    <location>
        <position position="73"/>
    </location>
    <ligand>
        <name>Zn(2+)</name>
        <dbReference type="ChEBI" id="CHEBI:29105"/>
        <label>1</label>
    </ligand>
</feature>
<feature type="binding site" evidence="1">
    <location>
        <position position="86"/>
    </location>
    <ligand>
        <name>Zn(2+)</name>
        <dbReference type="ChEBI" id="CHEBI:29105"/>
        <label>1</label>
    </ligand>
</feature>
<feature type="binding site" evidence="1">
    <location>
        <position position="89"/>
    </location>
    <ligand>
        <name>Zn(2+)</name>
        <dbReference type="ChEBI" id="CHEBI:29105"/>
        <label>1</label>
    </ligand>
</feature>
<feature type="binding site" evidence="1">
    <location>
        <position position="462"/>
    </location>
    <ligand>
        <name>Mg(2+)</name>
        <dbReference type="ChEBI" id="CHEBI:18420"/>
    </ligand>
</feature>
<feature type="binding site" evidence="1">
    <location>
        <position position="464"/>
    </location>
    <ligand>
        <name>Mg(2+)</name>
        <dbReference type="ChEBI" id="CHEBI:18420"/>
    </ligand>
</feature>
<feature type="binding site" evidence="1">
    <location>
        <position position="466"/>
    </location>
    <ligand>
        <name>Mg(2+)</name>
        <dbReference type="ChEBI" id="CHEBI:18420"/>
    </ligand>
</feature>
<feature type="binding site" evidence="1">
    <location>
        <position position="810"/>
    </location>
    <ligand>
        <name>Zn(2+)</name>
        <dbReference type="ChEBI" id="CHEBI:29105"/>
        <label>2</label>
    </ligand>
</feature>
<feature type="binding site" evidence="1">
    <location>
        <position position="884"/>
    </location>
    <ligand>
        <name>Zn(2+)</name>
        <dbReference type="ChEBI" id="CHEBI:29105"/>
        <label>2</label>
    </ligand>
</feature>
<feature type="binding site" evidence="1">
    <location>
        <position position="891"/>
    </location>
    <ligand>
        <name>Zn(2+)</name>
        <dbReference type="ChEBI" id="CHEBI:29105"/>
        <label>2</label>
    </ligand>
</feature>
<feature type="binding site" evidence="1">
    <location>
        <position position="894"/>
    </location>
    <ligand>
        <name>Zn(2+)</name>
        <dbReference type="ChEBI" id="CHEBI:29105"/>
        <label>2</label>
    </ligand>
</feature>
<name>RPOC_RHOPS</name>
<evidence type="ECO:0000255" key="1">
    <source>
        <dbReference type="HAMAP-Rule" id="MF_01322"/>
    </source>
</evidence>
<evidence type="ECO:0000256" key="2">
    <source>
        <dbReference type="SAM" id="MobiDB-lite"/>
    </source>
</evidence>
<organism>
    <name type="scientific">Rhodopseudomonas palustris (strain BisB5)</name>
    <dbReference type="NCBI Taxonomy" id="316057"/>
    <lineage>
        <taxon>Bacteria</taxon>
        <taxon>Pseudomonadati</taxon>
        <taxon>Pseudomonadota</taxon>
        <taxon>Alphaproteobacteria</taxon>
        <taxon>Hyphomicrobiales</taxon>
        <taxon>Nitrobacteraceae</taxon>
        <taxon>Rhodopseudomonas</taxon>
    </lineage>
</organism>